<proteinExistence type="inferred from homology"/>
<keyword id="KW-0067">ATP-binding</keyword>
<keyword id="KW-0315">Glutamine amidotransferase</keyword>
<keyword id="KW-0436">Ligase</keyword>
<keyword id="KW-0460">Magnesium</keyword>
<keyword id="KW-0479">Metal-binding</keyword>
<keyword id="KW-0547">Nucleotide-binding</keyword>
<keyword id="KW-0665">Pyrimidine biosynthesis</keyword>
<keyword id="KW-1185">Reference proteome</keyword>
<accession>B2IKQ2</accession>
<protein>
    <recommendedName>
        <fullName evidence="1">CTP synthase</fullName>
        <ecNumber evidence="1">6.3.4.2</ecNumber>
    </recommendedName>
    <alternativeName>
        <fullName evidence="1">Cytidine 5'-triphosphate synthase</fullName>
    </alternativeName>
    <alternativeName>
        <fullName evidence="1">Cytidine triphosphate synthetase</fullName>
        <shortName evidence="1">CTP synthetase</shortName>
        <shortName evidence="1">CTPS</shortName>
    </alternativeName>
    <alternativeName>
        <fullName evidence="1">UTP--ammonia ligase</fullName>
    </alternativeName>
</protein>
<gene>
    <name evidence="1" type="primary">pyrG</name>
    <name type="ordered locus">Bind_1452</name>
</gene>
<organism>
    <name type="scientific">Beijerinckia indica subsp. indica (strain ATCC 9039 / DSM 1715 / NCIMB 8712)</name>
    <dbReference type="NCBI Taxonomy" id="395963"/>
    <lineage>
        <taxon>Bacteria</taxon>
        <taxon>Pseudomonadati</taxon>
        <taxon>Pseudomonadota</taxon>
        <taxon>Alphaproteobacteria</taxon>
        <taxon>Hyphomicrobiales</taxon>
        <taxon>Beijerinckiaceae</taxon>
        <taxon>Beijerinckia</taxon>
    </lineage>
</organism>
<name>PYRG_BEII9</name>
<comment type="function">
    <text evidence="1">Catalyzes the ATP-dependent amination of UTP to CTP with either L-glutamine or ammonia as the source of nitrogen. Regulates intracellular CTP levels through interactions with the four ribonucleotide triphosphates.</text>
</comment>
<comment type="catalytic activity">
    <reaction evidence="1">
        <text>UTP + L-glutamine + ATP + H2O = CTP + L-glutamate + ADP + phosphate + 2 H(+)</text>
        <dbReference type="Rhea" id="RHEA:26426"/>
        <dbReference type="ChEBI" id="CHEBI:15377"/>
        <dbReference type="ChEBI" id="CHEBI:15378"/>
        <dbReference type="ChEBI" id="CHEBI:29985"/>
        <dbReference type="ChEBI" id="CHEBI:30616"/>
        <dbReference type="ChEBI" id="CHEBI:37563"/>
        <dbReference type="ChEBI" id="CHEBI:43474"/>
        <dbReference type="ChEBI" id="CHEBI:46398"/>
        <dbReference type="ChEBI" id="CHEBI:58359"/>
        <dbReference type="ChEBI" id="CHEBI:456216"/>
        <dbReference type="EC" id="6.3.4.2"/>
    </reaction>
</comment>
<comment type="catalytic activity">
    <reaction evidence="1">
        <text>L-glutamine + H2O = L-glutamate + NH4(+)</text>
        <dbReference type="Rhea" id="RHEA:15889"/>
        <dbReference type="ChEBI" id="CHEBI:15377"/>
        <dbReference type="ChEBI" id="CHEBI:28938"/>
        <dbReference type="ChEBI" id="CHEBI:29985"/>
        <dbReference type="ChEBI" id="CHEBI:58359"/>
    </reaction>
</comment>
<comment type="catalytic activity">
    <reaction evidence="1">
        <text>UTP + NH4(+) + ATP = CTP + ADP + phosphate + 2 H(+)</text>
        <dbReference type="Rhea" id="RHEA:16597"/>
        <dbReference type="ChEBI" id="CHEBI:15378"/>
        <dbReference type="ChEBI" id="CHEBI:28938"/>
        <dbReference type="ChEBI" id="CHEBI:30616"/>
        <dbReference type="ChEBI" id="CHEBI:37563"/>
        <dbReference type="ChEBI" id="CHEBI:43474"/>
        <dbReference type="ChEBI" id="CHEBI:46398"/>
        <dbReference type="ChEBI" id="CHEBI:456216"/>
    </reaction>
</comment>
<comment type="activity regulation">
    <text evidence="1">Allosterically activated by GTP, when glutamine is the substrate; GTP has no effect on the reaction when ammonia is the substrate. The allosteric effector GTP functions by stabilizing the protein conformation that binds the tetrahedral intermediate(s) formed during glutamine hydrolysis. Inhibited by the product CTP, via allosteric rather than competitive inhibition.</text>
</comment>
<comment type="pathway">
    <text evidence="1">Pyrimidine metabolism; CTP biosynthesis via de novo pathway; CTP from UDP: step 2/2.</text>
</comment>
<comment type="subunit">
    <text evidence="1">Homotetramer.</text>
</comment>
<comment type="miscellaneous">
    <text evidence="1">CTPSs have evolved a hybrid strategy for distinguishing between UTP and CTP. The overlapping regions of the product feedback inhibitory and substrate sites recognize a common feature in both compounds, the triphosphate moiety. To differentiate isosteric substrate and product pyrimidine rings, an additional pocket far from the expected kinase/ligase catalytic site, specifically recognizes the cytosine and ribose portions of the product inhibitor.</text>
</comment>
<comment type="similarity">
    <text evidence="1">Belongs to the CTP synthase family.</text>
</comment>
<reference key="1">
    <citation type="journal article" date="2010" name="J. Bacteriol.">
        <title>Complete genome sequence of Beijerinckia indica subsp. indica.</title>
        <authorList>
            <person name="Tamas I."/>
            <person name="Dedysh S.N."/>
            <person name="Liesack W."/>
            <person name="Stott M.B."/>
            <person name="Alam M."/>
            <person name="Murrell J.C."/>
            <person name="Dunfield P.F."/>
        </authorList>
    </citation>
    <scope>NUCLEOTIDE SEQUENCE [LARGE SCALE GENOMIC DNA]</scope>
    <source>
        <strain>ATCC 9039 / DSM 1715 / NCIMB 8712</strain>
    </source>
</reference>
<sequence>MARYIFITGGVVSSLGKGLASAALGALLQARGYTVRLRKLDPYLNIDPGTMSPYQHGEVFVTDDGAETDLDLGHYERFTGRPAVRDDNITTGRIYRDIIAKERRGDYLGATVQVVPHVTNAIKEFILTGNEGLDFVLVEIGGTVGDIEGLPFFEAIRQLGNELPRGHAIYIHLTLLPYIPSAGELKTKPTQHSVKELRSIGIQPHILLCRTDRPIPFEERRKLGLFCNVRENAVIEARDVSSIYDVPHAYHAAGLDQEVLSAFGIEPAPKPDMSRWKAVMERIDNPEGEVTIAIVGKYTGLKDAYKSLIEALSHGGIANRVRVNLDWIESEIFEGTDPAPHLEHVHGILVPGGFGQRGAEGKMLAARFARQRKVPFFGICFGMQMAVIEAVRSLADIPLANSTEFGPTNEPVVGLMTEWMRDNELQMRAAEGDLGGTMRLGAYPALLAAGSKIAEIYGATEISERHRHRYEVNTAYREQLAEKGMIFSGLSPDGLLPEVVEFQDHPWFIGVQYHPELKSRPFAPHPLFSSFIAAAMEQSRLV</sequence>
<dbReference type="EC" id="6.3.4.2" evidence="1"/>
<dbReference type="EMBL" id="CP001016">
    <property type="protein sequence ID" value="ACB95091.1"/>
    <property type="molecule type" value="Genomic_DNA"/>
</dbReference>
<dbReference type="RefSeq" id="WP_012384448.1">
    <property type="nucleotide sequence ID" value="NC_010581.1"/>
</dbReference>
<dbReference type="SMR" id="B2IKQ2"/>
<dbReference type="STRING" id="395963.Bind_1452"/>
<dbReference type="MEROPS" id="C26.964"/>
<dbReference type="KEGG" id="bid:Bind_1452"/>
<dbReference type="eggNOG" id="COG0504">
    <property type="taxonomic scope" value="Bacteria"/>
</dbReference>
<dbReference type="HOGENOM" id="CLU_011675_5_0_5"/>
<dbReference type="OrthoDB" id="9801107at2"/>
<dbReference type="UniPathway" id="UPA00159">
    <property type="reaction ID" value="UER00277"/>
</dbReference>
<dbReference type="Proteomes" id="UP000001695">
    <property type="component" value="Chromosome"/>
</dbReference>
<dbReference type="GO" id="GO:0005829">
    <property type="term" value="C:cytosol"/>
    <property type="evidence" value="ECO:0007669"/>
    <property type="project" value="TreeGrafter"/>
</dbReference>
<dbReference type="GO" id="GO:0005524">
    <property type="term" value="F:ATP binding"/>
    <property type="evidence" value="ECO:0007669"/>
    <property type="project" value="UniProtKB-KW"/>
</dbReference>
<dbReference type="GO" id="GO:0003883">
    <property type="term" value="F:CTP synthase activity"/>
    <property type="evidence" value="ECO:0007669"/>
    <property type="project" value="UniProtKB-UniRule"/>
</dbReference>
<dbReference type="GO" id="GO:0004359">
    <property type="term" value="F:glutaminase activity"/>
    <property type="evidence" value="ECO:0007669"/>
    <property type="project" value="RHEA"/>
</dbReference>
<dbReference type="GO" id="GO:0042802">
    <property type="term" value="F:identical protein binding"/>
    <property type="evidence" value="ECO:0007669"/>
    <property type="project" value="TreeGrafter"/>
</dbReference>
<dbReference type="GO" id="GO:0046872">
    <property type="term" value="F:metal ion binding"/>
    <property type="evidence" value="ECO:0007669"/>
    <property type="project" value="UniProtKB-KW"/>
</dbReference>
<dbReference type="GO" id="GO:0044210">
    <property type="term" value="P:'de novo' CTP biosynthetic process"/>
    <property type="evidence" value="ECO:0007669"/>
    <property type="project" value="UniProtKB-UniRule"/>
</dbReference>
<dbReference type="GO" id="GO:0019856">
    <property type="term" value="P:pyrimidine nucleobase biosynthetic process"/>
    <property type="evidence" value="ECO:0007669"/>
    <property type="project" value="TreeGrafter"/>
</dbReference>
<dbReference type="CDD" id="cd03113">
    <property type="entry name" value="CTPS_N"/>
    <property type="match status" value="1"/>
</dbReference>
<dbReference type="CDD" id="cd01746">
    <property type="entry name" value="GATase1_CTP_Synthase"/>
    <property type="match status" value="1"/>
</dbReference>
<dbReference type="FunFam" id="3.40.50.300:FF:000009">
    <property type="entry name" value="CTP synthase"/>
    <property type="match status" value="1"/>
</dbReference>
<dbReference type="FunFam" id="3.40.50.880:FF:000002">
    <property type="entry name" value="CTP synthase"/>
    <property type="match status" value="1"/>
</dbReference>
<dbReference type="Gene3D" id="3.40.50.880">
    <property type="match status" value="1"/>
</dbReference>
<dbReference type="Gene3D" id="3.40.50.300">
    <property type="entry name" value="P-loop containing nucleotide triphosphate hydrolases"/>
    <property type="match status" value="1"/>
</dbReference>
<dbReference type="HAMAP" id="MF_01227">
    <property type="entry name" value="PyrG"/>
    <property type="match status" value="1"/>
</dbReference>
<dbReference type="InterPro" id="IPR029062">
    <property type="entry name" value="Class_I_gatase-like"/>
</dbReference>
<dbReference type="InterPro" id="IPR004468">
    <property type="entry name" value="CTP_synthase"/>
</dbReference>
<dbReference type="InterPro" id="IPR017456">
    <property type="entry name" value="CTP_synthase_N"/>
</dbReference>
<dbReference type="InterPro" id="IPR017926">
    <property type="entry name" value="GATASE"/>
</dbReference>
<dbReference type="InterPro" id="IPR033828">
    <property type="entry name" value="GATase1_CTP_Synthase"/>
</dbReference>
<dbReference type="InterPro" id="IPR027417">
    <property type="entry name" value="P-loop_NTPase"/>
</dbReference>
<dbReference type="NCBIfam" id="NF003792">
    <property type="entry name" value="PRK05380.1"/>
    <property type="match status" value="1"/>
</dbReference>
<dbReference type="NCBIfam" id="TIGR00337">
    <property type="entry name" value="PyrG"/>
    <property type="match status" value="1"/>
</dbReference>
<dbReference type="PANTHER" id="PTHR11550">
    <property type="entry name" value="CTP SYNTHASE"/>
    <property type="match status" value="1"/>
</dbReference>
<dbReference type="PANTHER" id="PTHR11550:SF0">
    <property type="entry name" value="CTP SYNTHASE-RELATED"/>
    <property type="match status" value="1"/>
</dbReference>
<dbReference type="Pfam" id="PF06418">
    <property type="entry name" value="CTP_synth_N"/>
    <property type="match status" value="1"/>
</dbReference>
<dbReference type="Pfam" id="PF00117">
    <property type="entry name" value="GATase"/>
    <property type="match status" value="1"/>
</dbReference>
<dbReference type="SUPFAM" id="SSF52317">
    <property type="entry name" value="Class I glutamine amidotransferase-like"/>
    <property type="match status" value="1"/>
</dbReference>
<dbReference type="SUPFAM" id="SSF52540">
    <property type="entry name" value="P-loop containing nucleoside triphosphate hydrolases"/>
    <property type="match status" value="1"/>
</dbReference>
<dbReference type="PROSITE" id="PS51273">
    <property type="entry name" value="GATASE_TYPE_1"/>
    <property type="match status" value="1"/>
</dbReference>
<evidence type="ECO:0000255" key="1">
    <source>
        <dbReference type="HAMAP-Rule" id="MF_01227"/>
    </source>
</evidence>
<feature type="chain" id="PRO_1000139388" description="CTP synthase">
    <location>
        <begin position="1"/>
        <end position="542"/>
    </location>
</feature>
<feature type="domain" description="Glutamine amidotransferase type-1" evidence="1">
    <location>
        <begin position="291"/>
        <end position="541"/>
    </location>
</feature>
<feature type="region of interest" description="Amidoligase domain" evidence="1">
    <location>
        <begin position="1"/>
        <end position="265"/>
    </location>
</feature>
<feature type="active site" description="Nucleophile; for glutamine hydrolysis" evidence="1">
    <location>
        <position position="380"/>
    </location>
</feature>
<feature type="active site" evidence="1">
    <location>
        <position position="514"/>
    </location>
</feature>
<feature type="active site" evidence="1">
    <location>
        <position position="516"/>
    </location>
</feature>
<feature type="binding site" evidence="1">
    <location>
        <position position="13"/>
    </location>
    <ligand>
        <name>CTP</name>
        <dbReference type="ChEBI" id="CHEBI:37563"/>
        <note>allosteric inhibitor</note>
    </ligand>
</feature>
<feature type="binding site" evidence="1">
    <location>
        <position position="13"/>
    </location>
    <ligand>
        <name>UTP</name>
        <dbReference type="ChEBI" id="CHEBI:46398"/>
    </ligand>
</feature>
<feature type="binding site" evidence="1">
    <location>
        <begin position="14"/>
        <end position="19"/>
    </location>
    <ligand>
        <name>ATP</name>
        <dbReference type="ChEBI" id="CHEBI:30616"/>
    </ligand>
</feature>
<feature type="binding site" evidence="1">
    <location>
        <position position="54"/>
    </location>
    <ligand>
        <name>L-glutamine</name>
        <dbReference type="ChEBI" id="CHEBI:58359"/>
    </ligand>
</feature>
<feature type="binding site" evidence="1">
    <location>
        <position position="71"/>
    </location>
    <ligand>
        <name>ATP</name>
        <dbReference type="ChEBI" id="CHEBI:30616"/>
    </ligand>
</feature>
<feature type="binding site" evidence="1">
    <location>
        <position position="71"/>
    </location>
    <ligand>
        <name>Mg(2+)</name>
        <dbReference type="ChEBI" id="CHEBI:18420"/>
    </ligand>
</feature>
<feature type="binding site" evidence="1">
    <location>
        <position position="139"/>
    </location>
    <ligand>
        <name>Mg(2+)</name>
        <dbReference type="ChEBI" id="CHEBI:18420"/>
    </ligand>
</feature>
<feature type="binding site" evidence="1">
    <location>
        <begin position="146"/>
        <end position="148"/>
    </location>
    <ligand>
        <name>CTP</name>
        <dbReference type="ChEBI" id="CHEBI:37563"/>
        <note>allosteric inhibitor</note>
    </ligand>
</feature>
<feature type="binding site" evidence="1">
    <location>
        <begin position="186"/>
        <end position="191"/>
    </location>
    <ligand>
        <name>CTP</name>
        <dbReference type="ChEBI" id="CHEBI:37563"/>
        <note>allosteric inhibitor</note>
    </ligand>
</feature>
<feature type="binding site" evidence="1">
    <location>
        <begin position="186"/>
        <end position="191"/>
    </location>
    <ligand>
        <name>UTP</name>
        <dbReference type="ChEBI" id="CHEBI:46398"/>
    </ligand>
</feature>
<feature type="binding site" evidence="1">
    <location>
        <position position="222"/>
    </location>
    <ligand>
        <name>CTP</name>
        <dbReference type="ChEBI" id="CHEBI:37563"/>
        <note>allosteric inhibitor</note>
    </ligand>
</feature>
<feature type="binding site" evidence="1">
    <location>
        <position position="222"/>
    </location>
    <ligand>
        <name>UTP</name>
        <dbReference type="ChEBI" id="CHEBI:46398"/>
    </ligand>
</feature>
<feature type="binding site" evidence="1">
    <location>
        <begin position="238"/>
        <end position="240"/>
    </location>
    <ligand>
        <name>ATP</name>
        <dbReference type="ChEBI" id="CHEBI:30616"/>
    </ligand>
</feature>
<feature type="binding site" evidence="1">
    <location>
        <position position="353"/>
    </location>
    <ligand>
        <name>L-glutamine</name>
        <dbReference type="ChEBI" id="CHEBI:58359"/>
    </ligand>
</feature>
<feature type="binding site" evidence="1">
    <location>
        <begin position="381"/>
        <end position="384"/>
    </location>
    <ligand>
        <name>L-glutamine</name>
        <dbReference type="ChEBI" id="CHEBI:58359"/>
    </ligand>
</feature>
<feature type="binding site" evidence="1">
    <location>
        <position position="404"/>
    </location>
    <ligand>
        <name>L-glutamine</name>
        <dbReference type="ChEBI" id="CHEBI:58359"/>
    </ligand>
</feature>
<feature type="binding site" evidence="1">
    <location>
        <position position="469"/>
    </location>
    <ligand>
        <name>L-glutamine</name>
        <dbReference type="ChEBI" id="CHEBI:58359"/>
    </ligand>
</feature>